<protein>
    <recommendedName>
        <fullName>Uncharacterized protein HI_1054</fullName>
    </recommendedName>
</protein>
<dbReference type="EMBL" id="L42023">
    <property type="protein sequence ID" value="AAC22713.1"/>
    <property type="molecule type" value="Genomic_DNA"/>
</dbReference>
<dbReference type="PIR" id="E64019">
    <property type="entry name" value="E64019"/>
</dbReference>
<dbReference type="SMR" id="P44104"/>
<dbReference type="STRING" id="71421.HI_1054"/>
<dbReference type="REBASE" id="2820">
    <property type="entry name" value="HindVIP"/>
</dbReference>
<dbReference type="EnsemblBacteria" id="AAC22713">
    <property type="protein sequence ID" value="AAC22713"/>
    <property type="gene ID" value="HI_1054"/>
</dbReference>
<dbReference type="KEGG" id="hin:HI_1054"/>
<dbReference type="eggNOG" id="COG3421">
    <property type="taxonomic scope" value="Bacteria"/>
</dbReference>
<dbReference type="HOGENOM" id="CLU_016957_1_0_6"/>
<dbReference type="Proteomes" id="UP000000579">
    <property type="component" value="Chromosome"/>
</dbReference>
<sequence>MKGKTAAVQIKNRAKAAATVSEKQLIGRGVRYFPFAFEDKQPNKRKFDNDMQHELRILEELFYYTHDEQSRYISELKAELRKDGFIPENDKDKVLTTFKLKSEFADNENFKNLLIWANKKIPNPNAKANNADSLKANPPPQPLPFPVHGKLLQETQFTADENDEKARQIGTQNNFTETIEMSEIERHIFNKALHIKGKNSQSLFHFDRLQSKLNIQNRNELQNNLLKDWQIEFLGLGQDKQISPDDKLAGCLKILEMVEKHLNESDIPFIGTKEFTPKKLWEIFGTPKQKWVKKDDVKTAIATQNDWYVMDNFAGTSLEEALIQFISERLGDLKSKYDVHLIRNEEVFKLNNFADGEGFMPDFILLLKDKQKSSSNGVNDFLHYQIFIEPKGEHLVETDMWKKEFLEAITAEYGKDKILQKDTPHYRLIGLPFFTDNEKNPKEYEQFTKSFPLGEASLEK</sequence>
<proteinExistence type="predicted"/>
<feature type="chain" id="PRO_0000077998" description="Uncharacterized protein HI_1054">
    <location>
        <begin position="1"/>
        <end position="460"/>
    </location>
</feature>
<name>Y1054_HAEIN</name>
<reference key="1">
    <citation type="journal article" date="1995" name="Science">
        <title>Whole-genome random sequencing and assembly of Haemophilus influenzae Rd.</title>
        <authorList>
            <person name="Fleischmann R.D."/>
            <person name="Adams M.D."/>
            <person name="White O."/>
            <person name="Clayton R.A."/>
            <person name="Kirkness E.F."/>
            <person name="Kerlavage A.R."/>
            <person name="Bult C.J."/>
            <person name="Tomb J.-F."/>
            <person name="Dougherty B.A."/>
            <person name="Merrick J.M."/>
            <person name="McKenney K."/>
            <person name="Sutton G.G."/>
            <person name="FitzHugh W."/>
            <person name="Fields C.A."/>
            <person name="Gocayne J.D."/>
            <person name="Scott J.D."/>
            <person name="Shirley R."/>
            <person name="Liu L.-I."/>
            <person name="Glodek A."/>
            <person name="Kelley J.M."/>
            <person name="Weidman J.F."/>
            <person name="Phillips C.A."/>
            <person name="Spriggs T."/>
            <person name="Hedblom E."/>
            <person name="Cotton M.D."/>
            <person name="Utterback T.R."/>
            <person name="Hanna M.C."/>
            <person name="Nguyen D.T."/>
            <person name="Saudek D.M."/>
            <person name="Brandon R.C."/>
            <person name="Fine L.D."/>
            <person name="Fritchman J.L."/>
            <person name="Fuhrmann J.L."/>
            <person name="Geoghagen N.S.M."/>
            <person name="Gnehm C.L."/>
            <person name="McDonald L.A."/>
            <person name="Small K.V."/>
            <person name="Fraser C.M."/>
            <person name="Smith H.O."/>
            <person name="Venter J.C."/>
        </authorList>
    </citation>
    <scope>NUCLEOTIDE SEQUENCE [LARGE SCALE GENOMIC DNA]</scope>
    <source>
        <strain>ATCC 51907 / DSM 11121 / KW20 / Rd</strain>
    </source>
</reference>
<organism>
    <name type="scientific">Haemophilus influenzae (strain ATCC 51907 / DSM 11121 / KW20 / Rd)</name>
    <dbReference type="NCBI Taxonomy" id="71421"/>
    <lineage>
        <taxon>Bacteria</taxon>
        <taxon>Pseudomonadati</taxon>
        <taxon>Pseudomonadota</taxon>
        <taxon>Gammaproteobacteria</taxon>
        <taxon>Pasteurellales</taxon>
        <taxon>Pasteurellaceae</taxon>
        <taxon>Haemophilus</taxon>
    </lineage>
</organism>
<keyword id="KW-1185">Reference proteome</keyword>
<gene>
    <name type="ordered locus">HI_1054</name>
</gene>
<accession>P44104</accession>